<organism>
    <name type="scientific">Burkholderia orbicola (strain AU 1054)</name>
    <dbReference type="NCBI Taxonomy" id="331271"/>
    <lineage>
        <taxon>Bacteria</taxon>
        <taxon>Pseudomonadati</taxon>
        <taxon>Pseudomonadota</taxon>
        <taxon>Betaproteobacteria</taxon>
        <taxon>Burkholderiales</taxon>
        <taxon>Burkholderiaceae</taxon>
        <taxon>Burkholderia</taxon>
        <taxon>Burkholderia cepacia complex</taxon>
        <taxon>Burkholderia orbicola</taxon>
    </lineage>
</organism>
<keyword id="KW-0119">Carbohydrate metabolism</keyword>
<keyword id="KW-0963">Cytoplasm</keyword>
<keyword id="KW-0413">Isomerase</keyword>
<keyword id="KW-0460">Magnesium</keyword>
<keyword id="KW-0479">Metal-binding</keyword>
<keyword id="KW-0859">Xylose metabolism</keyword>
<dbReference type="EC" id="5.3.1.5" evidence="1"/>
<dbReference type="EMBL" id="CP000380">
    <property type="protein sequence ID" value="ABF81365.1"/>
    <property type="molecule type" value="Genomic_DNA"/>
</dbReference>
<dbReference type="SMR" id="Q1BG90"/>
<dbReference type="HOGENOM" id="CLU_037261_1_0_4"/>
<dbReference type="GO" id="GO:0005737">
    <property type="term" value="C:cytoplasm"/>
    <property type="evidence" value="ECO:0007669"/>
    <property type="project" value="UniProtKB-SubCell"/>
</dbReference>
<dbReference type="GO" id="GO:0000287">
    <property type="term" value="F:magnesium ion binding"/>
    <property type="evidence" value="ECO:0007669"/>
    <property type="project" value="UniProtKB-UniRule"/>
</dbReference>
<dbReference type="GO" id="GO:0009045">
    <property type="term" value="F:xylose isomerase activity"/>
    <property type="evidence" value="ECO:0007669"/>
    <property type="project" value="UniProtKB-UniRule"/>
</dbReference>
<dbReference type="GO" id="GO:0042732">
    <property type="term" value="P:D-xylose metabolic process"/>
    <property type="evidence" value="ECO:0007669"/>
    <property type="project" value="UniProtKB-UniRule"/>
</dbReference>
<dbReference type="FunFam" id="3.20.20.150:FF:000002">
    <property type="entry name" value="Xylose isomerase"/>
    <property type="match status" value="1"/>
</dbReference>
<dbReference type="Gene3D" id="3.20.20.150">
    <property type="entry name" value="Divalent-metal-dependent TIM barrel enzymes"/>
    <property type="match status" value="1"/>
</dbReference>
<dbReference type="HAMAP" id="MF_00455">
    <property type="entry name" value="Xylose_isom_A"/>
    <property type="match status" value="1"/>
</dbReference>
<dbReference type="InterPro" id="IPR036237">
    <property type="entry name" value="Xyl_isomerase-like_sf"/>
</dbReference>
<dbReference type="InterPro" id="IPR013452">
    <property type="entry name" value="Xylose_isom_bac"/>
</dbReference>
<dbReference type="InterPro" id="IPR001998">
    <property type="entry name" value="Xylose_isomerase"/>
</dbReference>
<dbReference type="NCBIfam" id="NF003998">
    <property type="entry name" value="PRK05474.1"/>
    <property type="match status" value="1"/>
</dbReference>
<dbReference type="NCBIfam" id="TIGR02630">
    <property type="entry name" value="xylose_isom_A"/>
    <property type="match status" value="1"/>
</dbReference>
<dbReference type="PANTHER" id="PTHR48408">
    <property type="match status" value="1"/>
</dbReference>
<dbReference type="PANTHER" id="PTHR48408:SF1">
    <property type="entry name" value="XYLOSE ISOMERASE"/>
    <property type="match status" value="1"/>
</dbReference>
<dbReference type="PRINTS" id="PR00688">
    <property type="entry name" value="XYLOSISMRASE"/>
</dbReference>
<dbReference type="SUPFAM" id="SSF51658">
    <property type="entry name" value="Xylose isomerase-like"/>
    <property type="match status" value="1"/>
</dbReference>
<dbReference type="PROSITE" id="PS51415">
    <property type="entry name" value="XYLOSE_ISOMERASE"/>
    <property type="match status" value="1"/>
</dbReference>
<proteinExistence type="inferred from homology"/>
<gene>
    <name evidence="1" type="primary">xylA</name>
    <name type="ordered locus">Bcen_6506</name>
</gene>
<evidence type="ECO:0000255" key="1">
    <source>
        <dbReference type="HAMAP-Rule" id="MF_00455"/>
    </source>
</evidence>
<protein>
    <recommendedName>
        <fullName evidence="1">Xylose isomerase</fullName>
        <ecNumber evidence="1">5.3.1.5</ecNumber>
    </recommendedName>
</protein>
<reference key="1">
    <citation type="submission" date="2006-05" db="EMBL/GenBank/DDBJ databases">
        <title>Complete sequence of chromosome 3 of Burkholderia cenocepacia AU 1054.</title>
        <authorList>
            <consortium name="US DOE Joint Genome Institute"/>
            <person name="Copeland A."/>
            <person name="Lucas S."/>
            <person name="Lapidus A."/>
            <person name="Barry K."/>
            <person name="Detter J.C."/>
            <person name="Glavina del Rio T."/>
            <person name="Hammon N."/>
            <person name="Israni S."/>
            <person name="Dalin E."/>
            <person name="Tice H."/>
            <person name="Pitluck S."/>
            <person name="Chain P."/>
            <person name="Malfatti S."/>
            <person name="Shin M."/>
            <person name="Vergez L."/>
            <person name="Schmutz J."/>
            <person name="Larimer F."/>
            <person name="Land M."/>
            <person name="Hauser L."/>
            <person name="Kyrpides N."/>
            <person name="Lykidis A."/>
            <person name="LiPuma J.J."/>
            <person name="Konstantinidis K."/>
            <person name="Tiedje J.M."/>
            <person name="Richardson P."/>
        </authorList>
    </citation>
    <scope>NUCLEOTIDE SEQUENCE [LARGE SCALE GENOMIC DNA]</scope>
    <source>
        <strain>AU 1054</strain>
    </source>
</reference>
<accession>Q1BG90</accession>
<sequence length="440" mass="49524">MSYFEHIPAIRYEGPQSDNPLAYHHYDPDKRVLGKTLAEHLRIAVCYWHTFVWPGHDIFGQGAFQRPWQQPGDALERARQKADAAFEFFTKLGTPFYTFHDTDVAPEGDSLRDYAANFARMVDYLGERQQASGVRLLWGTANLFSHPRFAAGAATNPNPDVFAWAATQVCHALDATHRLGGENYVLWGGREGYETLLNTDLKRERDQFARFLSMVVEHKHRIGFKGALLIEPKPQEPTKHQYDYDVATVHGFLVQYGLQNEIRVNIEANHATLAGHSFHHEIANAFALGVFGSVDANRGDPQNGWDTDQFPNSVEELTLAFYEILRHGGFTTGGMNFDAKVRRQSIDPEDLFYGHVGAIDVLALALERAAVLVENDRLDALRRQRYAQWDDAFGRKILSGGYTLESLAADALARGVNPRHASGAQERLENIVNQAIYGLR</sequence>
<feature type="chain" id="PRO_1000026433" description="Xylose isomerase">
    <location>
        <begin position="1"/>
        <end position="440"/>
    </location>
</feature>
<feature type="active site" evidence="1">
    <location>
        <position position="100"/>
    </location>
</feature>
<feature type="active site" evidence="1">
    <location>
        <position position="103"/>
    </location>
</feature>
<feature type="binding site" evidence="1">
    <location>
        <position position="231"/>
    </location>
    <ligand>
        <name>Mg(2+)</name>
        <dbReference type="ChEBI" id="CHEBI:18420"/>
        <label>1</label>
    </ligand>
</feature>
<feature type="binding site" evidence="1">
    <location>
        <position position="267"/>
    </location>
    <ligand>
        <name>Mg(2+)</name>
        <dbReference type="ChEBI" id="CHEBI:18420"/>
        <label>1</label>
    </ligand>
</feature>
<feature type="binding site" evidence="1">
    <location>
        <position position="267"/>
    </location>
    <ligand>
        <name>Mg(2+)</name>
        <dbReference type="ChEBI" id="CHEBI:18420"/>
        <label>2</label>
    </ligand>
</feature>
<feature type="binding site" evidence="1">
    <location>
        <position position="270"/>
    </location>
    <ligand>
        <name>Mg(2+)</name>
        <dbReference type="ChEBI" id="CHEBI:18420"/>
        <label>2</label>
    </ligand>
</feature>
<feature type="binding site" evidence="1">
    <location>
        <position position="295"/>
    </location>
    <ligand>
        <name>Mg(2+)</name>
        <dbReference type="ChEBI" id="CHEBI:18420"/>
        <label>1</label>
    </ligand>
</feature>
<feature type="binding site" evidence="1">
    <location>
        <position position="306"/>
    </location>
    <ligand>
        <name>Mg(2+)</name>
        <dbReference type="ChEBI" id="CHEBI:18420"/>
        <label>2</label>
    </ligand>
</feature>
<feature type="binding site" evidence="1">
    <location>
        <position position="308"/>
    </location>
    <ligand>
        <name>Mg(2+)</name>
        <dbReference type="ChEBI" id="CHEBI:18420"/>
        <label>2</label>
    </ligand>
</feature>
<feature type="binding site" evidence="1">
    <location>
        <position position="338"/>
    </location>
    <ligand>
        <name>Mg(2+)</name>
        <dbReference type="ChEBI" id="CHEBI:18420"/>
        <label>1</label>
    </ligand>
</feature>
<comment type="catalytic activity">
    <reaction evidence="1">
        <text>alpha-D-xylose = alpha-D-xylulofuranose</text>
        <dbReference type="Rhea" id="RHEA:22816"/>
        <dbReference type="ChEBI" id="CHEBI:28518"/>
        <dbReference type="ChEBI" id="CHEBI:188998"/>
        <dbReference type="EC" id="5.3.1.5"/>
    </reaction>
</comment>
<comment type="cofactor">
    <cofactor evidence="1">
        <name>Mg(2+)</name>
        <dbReference type="ChEBI" id="CHEBI:18420"/>
    </cofactor>
    <text evidence="1">Binds 2 magnesium ions per subunit.</text>
</comment>
<comment type="subunit">
    <text evidence="1">Homotetramer.</text>
</comment>
<comment type="subcellular location">
    <subcellularLocation>
        <location evidence="1">Cytoplasm</location>
    </subcellularLocation>
</comment>
<comment type="similarity">
    <text evidence="1">Belongs to the xylose isomerase family.</text>
</comment>
<name>XYLA_BURO1</name>